<reference evidence="5" key="1">
    <citation type="journal article" date="1972" name="J. Biol. Chem.">
        <title>Multiple hemoglobins of catostomid fish. I. Isolation and characterization of the isohemoglobins from Catostomus clarkii.</title>
        <authorList>
            <person name="Powers D.A."/>
            <person name="Edmundson A.B."/>
        </authorList>
    </citation>
    <scope>PROTEIN SEQUENCE</scope>
    <scope>SUBUNIT</scope>
    <source>
        <tissue evidence="3">Blood</tissue>
    </source>
</reference>
<feature type="chain" id="PRO_0000312767" description="Hemoglobin subunit beta-C">
    <location>
        <begin position="1"/>
        <end position="18" status="greater than"/>
    </location>
</feature>
<feature type="unsure residue" description="K or Q" evidence="3">
    <location>
        <position position="9"/>
    </location>
</feature>
<feature type="unsure residue" description="K or R" evidence="3">
    <location>
        <position position="17"/>
    </location>
</feature>
<feature type="non-terminal residue" evidence="4">
    <location>
        <position position="18"/>
    </location>
</feature>
<dbReference type="GO" id="GO:0046872">
    <property type="term" value="F:metal ion binding"/>
    <property type="evidence" value="ECO:0007669"/>
    <property type="project" value="UniProtKB-KW"/>
</dbReference>
<dbReference type="GO" id="GO:0005344">
    <property type="term" value="F:oxygen carrier activity"/>
    <property type="evidence" value="ECO:0007669"/>
    <property type="project" value="UniProtKB-KW"/>
</dbReference>
<gene>
    <name evidence="1 4" type="primary">hbbc</name>
</gene>
<sequence>VEWSDSERKTLVSVWGKI</sequence>
<accession>P85311</accession>
<comment type="function">
    <text evidence="5">Involved in oxygen transport from gills to the various peripheral tissues.</text>
</comment>
<comment type="subunit">
    <text evidence="3">Heterotetramer of two alpha chains and two beta chains.</text>
</comment>
<comment type="tissue specificity">
    <text evidence="5">Red blood cells.</text>
</comment>
<comment type="miscellaneous">
    <text evidence="3">This fish has ten hemoglobins, 8 of which are anodal and 2 cathodal. The cathodal tetramers do not exhibit the Bohr effect, due to lack of the C-terminal His in the beta chains and to blocking of the alpha-amino group on the N-terminal residue of the alpha chains. The possession of both anodal and cathodal hemoglobins may be a physiological advantage for fish living in fast-moving water habitats.</text>
</comment>
<comment type="miscellaneous">
    <text evidence="3">This fish possesses 6 types of hemoglobin chains, including a major alpha chain, a minor alpha chain, two major beta chains, and two minor beta chains.</text>
</comment>
<comment type="similarity">
    <text evidence="2">Belongs to the globin family.</text>
</comment>
<proteinExistence type="evidence at protein level"/>
<organism>
    <name type="scientific">Catostomus clarkii</name>
    <name type="common">Desert sucker</name>
    <dbReference type="NCBI Taxonomy" id="7970"/>
    <lineage>
        <taxon>Eukaryota</taxon>
        <taxon>Metazoa</taxon>
        <taxon>Chordata</taxon>
        <taxon>Craniata</taxon>
        <taxon>Vertebrata</taxon>
        <taxon>Euteleostomi</taxon>
        <taxon>Actinopterygii</taxon>
        <taxon>Neopterygii</taxon>
        <taxon>Teleostei</taxon>
        <taxon>Ostariophysi</taxon>
        <taxon>Cypriniformes</taxon>
        <taxon>Catostomoidei</taxon>
        <taxon>Catostomidae</taxon>
        <taxon>Pantosteus</taxon>
    </lineage>
</organism>
<protein>
    <recommendedName>
        <fullName>Hemoglobin subunit beta-C</fullName>
    </recommendedName>
    <alternativeName>
        <fullName>Beta-C-globin</fullName>
    </alternativeName>
    <alternativeName>
        <fullName>Hemoglobin beta-C chain</fullName>
    </alternativeName>
</protein>
<keyword id="KW-0903">Direct protein sequencing</keyword>
<keyword id="KW-0349">Heme</keyword>
<keyword id="KW-0408">Iron</keyword>
<keyword id="KW-0479">Metal-binding</keyword>
<keyword id="KW-0561">Oxygen transport</keyword>
<keyword id="KW-0813">Transport</keyword>
<name>HBBC_CATCL</name>
<evidence type="ECO:0000250" key="1">
    <source>
        <dbReference type="UniProtKB" id="P80727"/>
    </source>
</evidence>
<evidence type="ECO:0000255" key="2">
    <source>
        <dbReference type="PROSITE-ProRule" id="PRU00238"/>
    </source>
</evidence>
<evidence type="ECO:0000269" key="3">
    <source>
    </source>
</evidence>
<evidence type="ECO:0000303" key="4">
    <source>
    </source>
</evidence>
<evidence type="ECO:0000305" key="5"/>